<protein>
    <recommendedName>
        <fullName evidence="1">tRNA uridine 5-carboxymethylaminomethyl modification enzyme MnmG</fullName>
    </recommendedName>
    <alternativeName>
        <fullName evidence="1">Glucose-inhibited division protein A</fullName>
    </alternativeName>
</protein>
<dbReference type="EMBL" id="AE016853">
    <property type="protein sequence ID" value="AAO59023.1"/>
    <property type="molecule type" value="Genomic_DNA"/>
</dbReference>
<dbReference type="RefSeq" id="NP_795328.1">
    <property type="nucleotide sequence ID" value="NC_004578.1"/>
</dbReference>
<dbReference type="RefSeq" id="WP_011105594.1">
    <property type="nucleotide sequence ID" value="NC_004578.1"/>
</dbReference>
<dbReference type="SMR" id="Q87TS3"/>
<dbReference type="STRING" id="223283.PSPTO_5610"/>
<dbReference type="GeneID" id="1187302"/>
<dbReference type="KEGG" id="pst:PSPTO_5610"/>
<dbReference type="PATRIC" id="fig|223283.9.peg.5747"/>
<dbReference type="eggNOG" id="COG0445">
    <property type="taxonomic scope" value="Bacteria"/>
</dbReference>
<dbReference type="HOGENOM" id="CLU_007831_2_2_6"/>
<dbReference type="OrthoDB" id="9815560at2"/>
<dbReference type="PhylomeDB" id="Q87TS3"/>
<dbReference type="Proteomes" id="UP000002515">
    <property type="component" value="Chromosome"/>
</dbReference>
<dbReference type="GO" id="GO:0005829">
    <property type="term" value="C:cytosol"/>
    <property type="evidence" value="ECO:0007669"/>
    <property type="project" value="TreeGrafter"/>
</dbReference>
<dbReference type="GO" id="GO:0050660">
    <property type="term" value="F:flavin adenine dinucleotide binding"/>
    <property type="evidence" value="ECO:0007669"/>
    <property type="project" value="UniProtKB-UniRule"/>
</dbReference>
<dbReference type="GO" id="GO:0030488">
    <property type="term" value="P:tRNA methylation"/>
    <property type="evidence" value="ECO:0007669"/>
    <property type="project" value="TreeGrafter"/>
</dbReference>
<dbReference type="GO" id="GO:0002098">
    <property type="term" value="P:tRNA wobble uridine modification"/>
    <property type="evidence" value="ECO:0007669"/>
    <property type="project" value="InterPro"/>
</dbReference>
<dbReference type="FunFam" id="1.10.10.1800:FF:000001">
    <property type="entry name" value="tRNA uridine 5-carboxymethylaminomethyl modification enzyme MnmG"/>
    <property type="match status" value="1"/>
</dbReference>
<dbReference type="FunFam" id="1.10.150.570:FF:000001">
    <property type="entry name" value="tRNA uridine 5-carboxymethylaminomethyl modification enzyme MnmG"/>
    <property type="match status" value="1"/>
</dbReference>
<dbReference type="FunFam" id="3.50.50.60:FF:000002">
    <property type="entry name" value="tRNA uridine 5-carboxymethylaminomethyl modification enzyme MnmG"/>
    <property type="match status" value="1"/>
</dbReference>
<dbReference type="FunFam" id="3.50.50.60:FF:000010">
    <property type="entry name" value="tRNA uridine 5-carboxymethylaminomethyl modification enzyme MnmG"/>
    <property type="match status" value="1"/>
</dbReference>
<dbReference type="Gene3D" id="3.50.50.60">
    <property type="entry name" value="FAD/NAD(P)-binding domain"/>
    <property type="match status" value="2"/>
</dbReference>
<dbReference type="Gene3D" id="1.10.150.570">
    <property type="entry name" value="GidA associated domain, C-terminal subdomain"/>
    <property type="match status" value="1"/>
</dbReference>
<dbReference type="Gene3D" id="1.10.10.1800">
    <property type="entry name" value="tRNA uridine 5-carboxymethylaminomethyl modification enzyme MnmG/GidA"/>
    <property type="match status" value="1"/>
</dbReference>
<dbReference type="HAMAP" id="MF_00129">
    <property type="entry name" value="MnmG_GidA"/>
    <property type="match status" value="1"/>
</dbReference>
<dbReference type="InterPro" id="IPR036188">
    <property type="entry name" value="FAD/NAD-bd_sf"/>
</dbReference>
<dbReference type="InterPro" id="IPR049312">
    <property type="entry name" value="GIDA_C_N"/>
</dbReference>
<dbReference type="InterPro" id="IPR004416">
    <property type="entry name" value="MnmG"/>
</dbReference>
<dbReference type="InterPro" id="IPR002218">
    <property type="entry name" value="MnmG-rel"/>
</dbReference>
<dbReference type="InterPro" id="IPR020595">
    <property type="entry name" value="MnmG-rel_CS"/>
</dbReference>
<dbReference type="InterPro" id="IPR026904">
    <property type="entry name" value="MnmG_C"/>
</dbReference>
<dbReference type="InterPro" id="IPR047001">
    <property type="entry name" value="MnmG_C_subdom"/>
</dbReference>
<dbReference type="InterPro" id="IPR044920">
    <property type="entry name" value="MnmG_C_subdom_sf"/>
</dbReference>
<dbReference type="InterPro" id="IPR040131">
    <property type="entry name" value="MnmG_N"/>
</dbReference>
<dbReference type="NCBIfam" id="TIGR00136">
    <property type="entry name" value="mnmG_gidA"/>
    <property type="match status" value="1"/>
</dbReference>
<dbReference type="PANTHER" id="PTHR11806">
    <property type="entry name" value="GLUCOSE INHIBITED DIVISION PROTEIN A"/>
    <property type="match status" value="1"/>
</dbReference>
<dbReference type="PANTHER" id="PTHR11806:SF0">
    <property type="entry name" value="PROTEIN MTO1 HOMOLOG, MITOCHONDRIAL"/>
    <property type="match status" value="1"/>
</dbReference>
<dbReference type="Pfam" id="PF01134">
    <property type="entry name" value="GIDA"/>
    <property type="match status" value="1"/>
</dbReference>
<dbReference type="Pfam" id="PF21680">
    <property type="entry name" value="GIDA_C_1st"/>
    <property type="match status" value="1"/>
</dbReference>
<dbReference type="Pfam" id="PF13932">
    <property type="entry name" value="SAM_GIDA_C"/>
    <property type="match status" value="1"/>
</dbReference>
<dbReference type="SMART" id="SM01228">
    <property type="entry name" value="GIDA_assoc_3"/>
    <property type="match status" value="1"/>
</dbReference>
<dbReference type="SUPFAM" id="SSF51905">
    <property type="entry name" value="FAD/NAD(P)-binding domain"/>
    <property type="match status" value="1"/>
</dbReference>
<dbReference type="PROSITE" id="PS01280">
    <property type="entry name" value="GIDA_1"/>
    <property type="match status" value="1"/>
</dbReference>
<dbReference type="PROSITE" id="PS01281">
    <property type="entry name" value="GIDA_2"/>
    <property type="match status" value="1"/>
</dbReference>
<evidence type="ECO:0000255" key="1">
    <source>
        <dbReference type="HAMAP-Rule" id="MF_00129"/>
    </source>
</evidence>
<name>MNMG_PSESM</name>
<organism>
    <name type="scientific">Pseudomonas syringae pv. tomato (strain ATCC BAA-871 / DC3000)</name>
    <dbReference type="NCBI Taxonomy" id="223283"/>
    <lineage>
        <taxon>Bacteria</taxon>
        <taxon>Pseudomonadati</taxon>
        <taxon>Pseudomonadota</taxon>
        <taxon>Gammaproteobacteria</taxon>
        <taxon>Pseudomonadales</taxon>
        <taxon>Pseudomonadaceae</taxon>
        <taxon>Pseudomonas</taxon>
    </lineage>
</organism>
<keyword id="KW-0963">Cytoplasm</keyword>
<keyword id="KW-0274">FAD</keyword>
<keyword id="KW-0285">Flavoprotein</keyword>
<keyword id="KW-0520">NAD</keyword>
<keyword id="KW-1185">Reference proteome</keyword>
<keyword id="KW-0819">tRNA processing</keyword>
<feature type="chain" id="PRO_0000117158" description="tRNA uridine 5-carboxymethylaminomethyl modification enzyme MnmG">
    <location>
        <begin position="1"/>
        <end position="630"/>
    </location>
</feature>
<feature type="binding site" evidence="1">
    <location>
        <begin position="13"/>
        <end position="18"/>
    </location>
    <ligand>
        <name>FAD</name>
        <dbReference type="ChEBI" id="CHEBI:57692"/>
    </ligand>
</feature>
<feature type="binding site" evidence="1">
    <location>
        <begin position="273"/>
        <end position="287"/>
    </location>
    <ligand>
        <name>NAD(+)</name>
        <dbReference type="ChEBI" id="CHEBI:57540"/>
    </ligand>
</feature>
<comment type="function">
    <text evidence="1">NAD-binding protein involved in the addition of a carboxymethylaminomethyl (cmnm) group at the wobble position (U34) of certain tRNAs, forming tRNA-cmnm(5)s(2)U34.</text>
</comment>
<comment type="cofactor">
    <cofactor evidence="1">
        <name>FAD</name>
        <dbReference type="ChEBI" id="CHEBI:57692"/>
    </cofactor>
</comment>
<comment type="subunit">
    <text evidence="1">Homodimer. Heterotetramer of two MnmE and two MnmG subunits.</text>
</comment>
<comment type="subcellular location">
    <subcellularLocation>
        <location evidence="1">Cytoplasm</location>
    </subcellularLocation>
</comment>
<comment type="similarity">
    <text evidence="1">Belongs to the MnmG family.</text>
</comment>
<gene>
    <name evidence="1" type="primary">mnmG</name>
    <name evidence="1" type="synonym">gidA</name>
    <name type="ordered locus">PSPTO_5610</name>
</gene>
<sequence length="630" mass="69255">MDFPSRFEVIVIGGGHAGTEAALASARMGVKTLLLTHNVETLGQMSCNPAIGGIGKSHLVKEIDALGGAMAMATDKGGIQFRVLNSRKGPAVRATRAQADRVLYKAAIREILENQPNLWIFQQACDDLIVEQDQVRGVVTQMGLRILADSVVLTTGTFLGGLIHIGMQNYSGGRAGDPPSIALAQRLRELPLRVGRLKTGTPPRIDGRSVDFSVMTEQPGDTPILVMSFLGSKEQHPAQVSCWITHTNARTHEIIASNLDRSPMYSGVIEGIGPRYCPSIEDKIHRFADKESHQVFIEPEGLTTHELYPNGISTSLPFDVQLQIVRSIRGMENAHIVRPGYAIEYDYFDPRDLKYSLETKVIGGLFFAGQINGTTGYEEAGAQGLLAGTNAALRAQGRDSWCPRRDEAYIGVLVDDLITLGTQEPYRMFTSRAEYRLILREDNADLRLTEKGRELGLVDDARWAAFCTKRESIELEEQRLKSTWVRPGTQQGDAISAHFGTPLTHEYNLLNLLTRPEIDYNSLIALTGQGCADPLVAEQVEIKTKYAGYIDRQQEEIARLRASEDTRLPEDIDYTGISGLSKEIQSKLGITRPETLGQASRIPGVTPAAISLLMIHLKKRGAGRQLEQSA</sequence>
<proteinExistence type="inferred from homology"/>
<accession>Q87TS3</accession>
<reference key="1">
    <citation type="journal article" date="2003" name="Proc. Natl. Acad. Sci. U.S.A.">
        <title>The complete genome sequence of the Arabidopsis and tomato pathogen Pseudomonas syringae pv. tomato DC3000.</title>
        <authorList>
            <person name="Buell C.R."/>
            <person name="Joardar V."/>
            <person name="Lindeberg M."/>
            <person name="Selengut J."/>
            <person name="Paulsen I.T."/>
            <person name="Gwinn M.L."/>
            <person name="Dodson R.J."/>
            <person name="DeBoy R.T."/>
            <person name="Durkin A.S."/>
            <person name="Kolonay J.F."/>
            <person name="Madupu R."/>
            <person name="Daugherty S.C."/>
            <person name="Brinkac L.M."/>
            <person name="Beanan M.J."/>
            <person name="Haft D.H."/>
            <person name="Nelson W.C."/>
            <person name="Davidsen T.M."/>
            <person name="Zafar N."/>
            <person name="Zhou L."/>
            <person name="Liu J."/>
            <person name="Yuan Q."/>
            <person name="Khouri H.M."/>
            <person name="Fedorova N.B."/>
            <person name="Tran B."/>
            <person name="Russell D."/>
            <person name="Berry K.J."/>
            <person name="Utterback T.R."/>
            <person name="Van Aken S.E."/>
            <person name="Feldblyum T.V."/>
            <person name="D'Ascenzo M."/>
            <person name="Deng W.-L."/>
            <person name="Ramos A.R."/>
            <person name="Alfano J.R."/>
            <person name="Cartinhour S."/>
            <person name="Chatterjee A.K."/>
            <person name="Delaney T.P."/>
            <person name="Lazarowitz S.G."/>
            <person name="Martin G.B."/>
            <person name="Schneider D.J."/>
            <person name="Tang X."/>
            <person name="Bender C.L."/>
            <person name="White O."/>
            <person name="Fraser C.M."/>
            <person name="Collmer A."/>
        </authorList>
    </citation>
    <scope>NUCLEOTIDE SEQUENCE [LARGE SCALE GENOMIC DNA]</scope>
    <source>
        <strain>ATCC BAA-871 / DC3000</strain>
    </source>
</reference>